<gene>
    <name evidence="8" type="primary">Nat8f3</name>
    <name evidence="8" type="synonym">Cml3</name>
</gene>
<comment type="function">
    <text evidence="1">Has histone acetyltransferase activity in vitro, with specificity for histone H4.</text>
</comment>
<comment type="catalytic activity">
    <reaction evidence="1">
        <text>L-lysyl-[protein] + acetyl-CoA = N(6)-acetyl-L-lysyl-[protein] + CoA + H(+)</text>
        <dbReference type="Rhea" id="RHEA:45948"/>
        <dbReference type="Rhea" id="RHEA-COMP:9752"/>
        <dbReference type="Rhea" id="RHEA-COMP:10731"/>
        <dbReference type="ChEBI" id="CHEBI:15378"/>
        <dbReference type="ChEBI" id="CHEBI:29969"/>
        <dbReference type="ChEBI" id="CHEBI:57287"/>
        <dbReference type="ChEBI" id="CHEBI:57288"/>
        <dbReference type="ChEBI" id="CHEBI:61930"/>
        <dbReference type="EC" id="2.3.1.48"/>
    </reaction>
</comment>
<comment type="subcellular location">
    <subcellularLocation>
        <location evidence="1">Nucleus membrane</location>
        <topology evidence="2">Multi-pass membrane protein</topology>
    </subcellularLocation>
    <subcellularLocation>
        <location evidence="1">Cytoplasm</location>
        <location evidence="1">Perinuclear region</location>
    </subcellularLocation>
    <subcellularLocation>
        <location evidence="1">Cytoplasm</location>
    </subcellularLocation>
    <text evidence="1">C-terminally tagged constructs localize to the nuclear membrane and perinuclear region. N-terminally tagged constructs show a punctate cytoplasmic distribution.</text>
</comment>
<comment type="similarity">
    <text evidence="4">Belongs to the camello family.</text>
</comment>
<dbReference type="EC" id="2.3.1.48" evidence="1"/>
<dbReference type="EMBL" id="AABR03032859">
    <property type="status" value="NOT_ANNOTATED_CDS"/>
    <property type="molecule type" value="Genomic_DNA"/>
</dbReference>
<dbReference type="EMBL" id="AF187814">
    <property type="protein sequence ID" value="AAF22304.1"/>
    <property type="molecule type" value="mRNA"/>
</dbReference>
<dbReference type="RefSeq" id="NP_543159.1">
    <property type="nucleotide sequence ID" value="NM_080883.1"/>
</dbReference>
<dbReference type="RefSeq" id="XP_006225036.1">
    <property type="nucleotide sequence ID" value="XM_006224974.3"/>
</dbReference>
<dbReference type="RefSeq" id="XP_006236860.1">
    <property type="nucleotide sequence ID" value="XM_006236798.3"/>
</dbReference>
<dbReference type="SMR" id="Q9QXS4"/>
<dbReference type="FunCoup" id="Q9QXS4">
    <property type="interactions" value="59"/>
</dbReference>
<dbReference type="STRING" id="10116.ENSRNOP00000021103"/>
<dbReference type="PhosphoSitePlus" id="Q9QXS4"/>
<dbReference type="PaxDb" id="10116-ENSRNOP00000021103"/>
<dbReference type="Ensembl" id="ENSRNOT00000099291.1">
    <property type="protein sequence ID" value="ENSRNOP00000092145.1"/>
    <property type="gene ID" value="ENSRNOG00000067962.1"/>
</dbReference>
<dbReference type="Ensembl" id="ENSRNOT00000114629.1">
    <property type="protein sequence ID" value="ENSRNOP00000093260.1"/>
    <property type="gene ID" value="ENSRNOG00000067962.1"/>
</dbReference>
<dbReference type="GeneID" id="113892"/>
<dbReference type="UCSC" id="RGD:621607">
    <property type="organism name" value="rat"/>
</dbReference>
<dbReference type="AGR" id="RGD:621607"/>
<dbReference type="RGD" id="621607">
    <property type="gene designation" value="Nat8f3"/>
</dbReference>
<dbReference type="eggNOG" id="KOG3139">
    <property type="taxonomic scope" value="Eukaryota"/>
</dbReference>
<dbReference type="GeneTree" id="ENSGT00950000182932"/>
<dbReference type="HOGENOM" id="CLU_013985_10_1_1"/>
<dbReference type="InParanoid" id="Q9QXS4"/>
<dbReference type="OMA" id="HRMKGIA"/>
<dbReference type="PhylomeDB" id="Q9QXS4"/>
<dbReference type="TreeFam" id="TF324687"/>
<dbReference type="PRO" id="PR:Q9QXS4"/>
<dbReference type="Proteomes" id="UP000002494">
    <property type="component" value="Chromosome 4"/>
</dbReference>
<dbReference type="Bgee" id="ENSRNOG00000015763">
    <property type="expression patterns" value="Expressed in adult mammalian kidney and 19 other cell types or tissues"/>
</dbReference>
<dbReference type="GO" id="GO:0016020">
    <property type="term" value="C:membrane"/>
    <property type="evidence" value="ECO:0000303"/>
    <property type="project" value="UniProtKB"/>
</dbReference>
<dbReference type="GO" id="GO:0031965">
    <property type="term" value="C:nuclear membrane"/>
    <property type="evidence" value="ECO:0000266"/>
    <property type="project" value="RGD"/>
</dbReference>
<dbReference type="GO" id="GO:0005634">
    <property type="term" value="C:nucleus"/>
    <property type="evidence" value="ECO:0000266"/>
    <property type="project" value="RGD"/>
</dbReference>
<dbReference type="GO" id="GO:0048471">
    <property type="term" value="C:perinuclear region of cytoplasm"/>
    <property type="evidence" value="ECO:0007669"/>
    <property type="project" value="UniProtKB-SubCell"/>
</dbReference>
<dbReference type="GO" id="GO:0010485">
    <property type="term" value="F:histone H4 acetyltransferase activity"/>
    <property type="evidence" value="ECO:0000266"/>
    <property type="project" value="RGD"/>
</dbReference>
<dbReference type="GO" id="GO:0008080">
    <property type="term" value="F:N-acetyltransferase activity"/>
    <property type="evidence" value="ECO:0000318"/>
    <property type="project" value="GO_Central"/>
</dbReference>
<dbReference type="GO" id="GO:0001702">
    <property type="term" value="P:gastrulation with mouth forming second"/>
    <property type="evidence" value="ECO:0000303"/>
    <property type="project" value="UniProtKB"/>
</dbReference>
<dbReference type="CDD" id="cd04301">
    <property type="entry name" value="NAT_SF"/>
    <property type="match status" value="1"/>
</dbReference>
<dbReference type="Gene3D" id="3.40.630.30">
    <property type="match status" value="1"/>
</dbReference>
<dbReference type="InterPro" id="IPR016181">
    <property type="entry name" value="Acyl_CoA_acyltransferase"/>
</dbReference>
<dbReference type="InterPro" id="IPR000182">
    <property type="entry name" value="GNAT_dom"/>
</dbReference>
<dbReference type="InterPro" id="IPR050769">
    <property type="entry name" value="NAT_camello-type"/>
</dbReference>
<dbReference type="PANTHER" id="PTHR13947">
    <property type="entry name" value="GNAT FAMILY N-ACETYLTRANSFERASE"/>
    <property type="match status" value="1"/>
</dbReference>
<dbReference type="PANTHER" id="PTHR13947:SF2">
    <property type="entry name" value="N-ACETYLTRANSFERASE FAMILY 8 MEMBER 3-RELATED"/>
    <property type="match status" value="1"/>
</dbReference>
<dbReference type="Pfam" id="PF00583">
    <property type="entry name" value="Acetyltransf_1"/>
    <property type="match status" value="1"/>
</dbReference>
<dbReference type="SUPFAM" id="SSF55729">
    <property type="entry name" value="Acyl-CoA N-acyltransferases (Nat)"/>
    <property type="match status" value="1"/>
</dbReference>
<dbReference type="PROSITE" id="PS51186">
    <property type="entry name" value="GNAT"/>
    <property type="match status" value="1"/>
</dbReference>
<feature type="chain" id="PRO_0000284691" description="N-acetyltransferase family 8 member 3">
    <location>
        <begin position="1"/>
        <end position="228"/>
    </location>
</feature>
<feature type="transmembrane region" description="Helical" evidence="2">
    <location>
        <begin position="36"/>
        <end position="56"/>
    </location>
</feature>
<feature type="transmembrane region" description="Helical" evidence="2">
    <location>
        <begin position="58"/>
        <end position="78"/>
    </location>
</feature>
<feature type="domain" description="N-acetyltransferase" evidence="3">
    <location>
        <begin position="61"/>
        <end position="217"/>
    </location>
</feature>
<accession>Q9QXS4</accession>
<proteinExistence type="evidence at transcript level"/>
<organism>
    <name type="scientific">Rattus norvegicus</name>
    <name type="common">Rat</name>
    <dbReference type="NCBI Taxonomy" id="10116"/>
    <lineage>
        <taxon>Eukaryota</taxon>
        <taxon>Metazoa</taxon>
        <taxon>Chordata</taxon>
        <taxon>Craniata</taxon>
        <taxon>Vertebrata</taxon>
        <taxon>Euteleostomi</taxon>
        <taxon>Mammalia</taxon>
        <taxon>Eutheria</taxon>
        <taxon>Euarchontoglires</taxon>
        <taxon>Glires</taxon>
        <taxon>Rodentia</taxon>
        <taxon>Myomorpha</taxon>
        <taxon>Muroidea</taxon>
        <taxon>Muridae</taxon>
        <taxon>Murinae</taxon>
        <taxon>Rattus</taxon>
    </lineage>
</organism>
<name>NT8F3_RAT</name>
<protein>
    <recommendedName>
        <fullName evidence="8">N-acetyltransferase family 8 member 3</fullName>
        <ecNumber evidence="1">2.3.1.48</ecNumber>
    </recommendedName>
    <alternativeName>
        <fullName evidence="8">Camello-like protein 3</fullName>
    </alternativeName>
    <alternativeName>
        <fullName evidence="8">N-acetyltransferase CML3</fullName>
    </alternativeName>
</protein>
<keyword id="KW-0012">Acyltransferase</keyword>
<keyword id="KW-0963">Cytoplasm</keyword>
<keyword id="KW-0472">Membrane</keyword>
<keyword id="KW-0539">Nucleus</keyword>
<keyword id="KW-1185">Reference proteome</keyword>
<keyword id="KW-0808">Transferase</keyword>
<keyword id="KW-0812">Transmembrane</keyword>
<keyword id="KW-1133">Transmembrane helix</keyword>
<evidence type="ECO:0000250" key="1">
    <source>
        <dbReference type="UniProtKB" id="Q9JIY8"/>
    </source>
</evidence>
<evidence type="ECO:0000255" key="2"/>
<evidence type="ECO:0000255" key="3">
    <source>
        <dbReference type="PROSITE-ProRule" id="PRU00532"/>
    </source>
</evidence>
<evidence type="ECO:0000269" key="4">
    <source>
    </source>
</evidence>
<evidence type="ECO:0000269" key="5">
    <source>
    </source>
</evidence>
<evidence type="ECO:0000305" key="6"/>
<evidence type="ECO:0000312" key="7">
    <source>
        <dbReference type="EMBL" id="AAF22304.1"/>
    </source>
</evidence>
<evidence type="ECO:0000312" key="8">
    <source>
        <dbReference type="RGD" id="621607"/>
    </source>
</evidence>
<sequence length="228" mass="26038">MAPYHIRKYQDSDHRSVVNLFCRGTEEHISASFRYMLLLPGTLLILLGVPLTLFLASGSWLLVLLSTLTLLVSLWLLAKYPWEKYTAMCLHSDMADIPRTYLSSHYSCFWVAESRGQMVGIIAVLPVKDPLLQRKQLQLRHLSVSLEHRREGIGRAMVRTALQFAEMQGFSEVVLVTSMLQYAALALYQSMGFQKTGEFFYTFVSRLRNSPMICLKYCLTSALNDLKT</sequence>
<reference evidence="6" key="1">
    <citation type="journal article" date="2004" name="Nature">
        <title>Genome sequence of the Brown Norway rat yields insights into mammalian evolution.</title>
        <authorList>
            <person name="Gibbs R.A."/>
            <person name="Weinstock G.M."/>
            <person name="Metzker M.L."/>
            <person name="Muzny D.M."/>
            <person name="Sodergren E.J."/>
            <person name="Scherer S."/>
            <person name="Scott G."/>
            <person name="Steffen D."/>
            <person name="Worley K.C."/>
            <person name="Burch P.E."/>
            <person name="Okwuonu G."/>
            <person name="Hines S."/>
            <person name="Lewis L."/>
            <person name="Deramo C."/>
            <person name="Delgado O."/>
            <person name="Dugan-Rocha S."/>
            <person name="Miner G."/>
            <person name="Morgan M."/>
            <person name="Hawes A."/>
            <person name="Gill R."/>
            <person name="Holt R.A."/>
            <person name="Adams M.D."/>
            <person name="Amanatides P.G."/>
            <person name="Baden-Tillson H."/>
            <person name="Barnstead M."/>
            <person name="Chin S."/>
            <person name="Evans C.A."/>
            <person name="Ferriera S."/>
            <person name="Fosler C."/>
            <person name="Glodek A."/>
            <person name="Gu Z."/>
            <person name="Jennings D."/>
            <person name="Kraft C.L."/>
            <person name="Nguyen T."/>
            <person name="Pfannkoch C.M."/>
            <person name="Sitter C."/>
            <person name="Sutton G.G."/>
            <person name="Venter J.C."/>
            <person name="Woodage T."/>
            <person name="Smith D."/>
            <person name="Lee H.-M."/>
            <person name="Gustafson E."/>
            <person name="Cahill P."/>
            <person name="Kana A."/>
            <person name="Doucette-Stamm L."/>
            <person name="Weinstock K."/>
            <person name="Fechtel K."/>
            <person name="Weiss R.B."/>
            <person name="Dunn D.M."/>
            <person name="Green E.D."/>
            <person name="Blakesley R.W."/>
            <person name="Bouffard G.G."/>
            <person name="De Jong P.J."/>
            <person name="Osoegawa K."/>
            <person name="Zhu B."/>
            <person name="Marra M."/>
            <person name="Schein J."/>
            <person name="Bosdet I."/>
            <person name="Fjell C."/>
            <person name="Jones S."/>
            <person name="Krzywinski M."/>
            <person name="Mathewson C."/>
            <person name="Siddiqui A."/>
            <person name="Wye N."/>
            <person name="McPherson J."/>
            <person name="Zhao S."/>
            <person name="Fraser C.M."/>
            <person name="Shetty J."/>
            <person name="Shatsman S."/>
            <person name="Geer K."/>
            <person name="Chen Y."/>
            <person name="Abramzon S."/>
            <person name="Nierman W.C."/>
            <person name="Havlak P.H."/>
            <person name="Chen R."/>
            <person name="Durbin K.J."/>
            <person name="Egan A."/>
            <person name="Ren Y."/>
            <person name="Song X.-Z."/>
            <person name="Li B."/>
            <person name="Liu Y."/>
            <person name="Qin X."/>
            <person name="Cawley S."/>
            <person name="Cooney A.J."/>
            <person name="D'Souza L.M."/>
            <person name="Martin K."/>
            <person name="Wu J.Q."/>
            <person name="Gonzalez-Garay M.L."/>
            <person name="Jackson A.R."/>
            <person name="Kalafus K.J."/>
            <person name="McLeod M.P."/>
            <person name="Milosavljevic A."/>
            <person name="Virk D."/>
            <person name="Volkov A."/>
            <person name="Wheeler D.A."/>
            <person name="Zhang Z."/>
            <person name="Bailey J.A."/>
            <person name="Eichler E.E."/>
            <person name="Tuzun E."/>
            <person name="Birney E."/>
            <person name="Mongin E."/>
            <person name="Ureta-Vidal A."/>
            <person name="Woodwark C."/>
            <person name="Zdobnov E."/>
            <person name="Bork P."/>
            <person name="Suyama M."/>
            <person name="Torrents D."/>
            <person name="Alexandersson M."/>
            <person name="Trask B.J."/>
            <person name="Young J.M."/>
            <person name="Huang H."/>
            <person name="Wang H."/>
            <person name="Xing H."/>
            <person name="Daniels S."/>
            <person name="Gietzen D."/>
            <person name="Schmidt J."/>
            <person name="Stevens K."/>
            <person name="Vitt U."/>
            <person name="Wingrove J."/>
            <person name="Camara F."/>
            <person name="Mar Alba M."/>
            <person name="Abril J.F."/>
            <person name="Guigo R."/>
            <person name="Smit A."/>
            <person name="Dubchak I."/>
            <person name="Rubin E.M."/>
            <person name="Couronne O."/>
            <person name="Poliakov A."/>
            <person name="Huebner N."/>
            <person name="Ganten D."/>
            <person name="Goesele C."/>
            <person name="Hummel O."/>
            <person name="Kreitler T."/>
            <person name="Lee Y.-A."/>
            <person name="Monti J."/>
            <person name="Schulz H."/>
            <person name="Zimdahl H."/>
            <person name="Himmelbauer H."/>
            <person name="Lehrach H."/>
            <person name="Jacob H.J."/>
            <person name="Bromberg S."/>
            <person name="Gullings-Handley J."/>
            <person name="Jensen-Seaman M.I."/>
            <person name="Kwitek A.E."/>
            <person name="Lazar J."/>
            <person name="Pasko D."/>
            <person name="Tonellato P.J."/>
            <person name="Twigger S."/>
            <person name="Ponting C.P."/>
            <person name="Duarte J.M."/>
            <person name="Rice S."/>
            <person name="Goodstadt L."/>
            <person name="Beatson S.A."/>
            <person name="Emes R.D."/>
            <person name="Winter E.E."/>
            <person name="Webber C."/>
            <person name="Brandt P."/>
            <person name="Nyakatura G."/>
            <person name="Adetobi M."/>
            <person name="Chiaromonte F."/>
            <person name="Elnitski L."/>
            <person name="Eswara P."/>
            <person name="Hardison R.C."/>
            <person name="Hou M."/>
            <person name="Kolbe D."/>
            <person name="Makova K."/>
            <person name="Miller W."/>
            <person name="Nekrutenko A."/>
            <person name="Riemer C."/>
            <person name="Schwartz S."/>
            <person name="Taylor J."/>
            <person name="Yang S."/>
            <person name="Zhang Y."/>
            <person name="Lindpaintner K."/>
            <person name="Andrews T.D."/>
            <person name="Caccamo M."/>
            <person name="Clamp M."/>
            <person name="Clarke L."/>
            <person name="Curwen V."/>
            <person name="Durbin R.M."/>
            <person name="Eyras E."/>
            <person name="Searle S.M."/>
            <person name="Cooper G.M."/>
            <person name="Batzoglou S."/>
            <person name="Brudno M."/>
            <person name="Sidow A."/>
            <person name="Stone E.A."/>
            <person name="Payseur B.A."/>
            <person name="Bourque G."/>
            <person name="Lopez-Otin C."/>
            <person name="Puente X.S."/>
            <person name="Chakrabarti K."/>
            <person name="Chatterji S."/>
            <person name="Dewey C."/>
            <person name="Pachter L."/>
            <person name="Bray N."/>
            <person name="Yap V.B."/>
            <person name="Caspi A."/>
            <person name="Tesler G."/>
            <person name="Pevzner P.A."/>
            <person name="Haussler D."/>
            <person name="Roskin K.M."/>
            <person name="Baertsch R."/>
            <person name="Clawson H."/>
            <person name="Furey T.S."/>
            <person name="Hinrichs A.S."/>
            <person name="Karolchik D."/>
            <person name="Kent W.J."/>
            <person name="Rosenbloom K.R."/>
            <person name="Trumbower H."/>
            <person name="Weirauch M."/>
            <person name="Cooper D.N."/>
            <person name="Stenson P.D."/>
            <person name="Ma B."/>
            <person name="Brent M."/>
            <person name="Arumugam M."/>
            <person name="Shteynberg D."/>
            <person name="Copley R.R."/>
            <person name="Taylor M.S."/>
            <person name="Riethman H."/>
            <person name="Mudunuri U."/>
            <person name="Peterson J."/>
            <person name="Guyer M."/>
            <person name="Felsenfeld A."/>
            <person name="Old S."/>
            <person name="Mockrin S."/>
            <person name="Collins F.S."/>
        </authorList>
    </citation>
    <scope>NUCLEOTIDE SEQUENCE [LARGE SCALE GENOMIC DNA]</scope>
    <source>
        <strain evidence="5">Brown Norway</strain>
    </source>
</reference>
<reference evidence="6 7" key="2">
    <citation type="journal article" date="2001" name="Dev. Biol.">
        <title>Overexpression of camello, a member of a novel protein family, reduces blastomere adhesion and inhibits gastrulation in Xenopus laevis.</title>
        <authorList>
            <person name="Popsueva A.E."/>
            <person name="Luchinskaya N.N."/>
            <person name="Ludwig A.V."/>
            <person name="Zinovjeva O.Y."/>
            <person name="Poteryaev D.A."/>
            <person name="Feigelman M.M."/>
            <person name="Ponomarev M.B."/>
            <person name="Berekelya L."/>
            <person name="Belyavsky A.V."/>
        </authorList>
    </citation>
    <scope>NUCLEOTIDE SEQUENCE [MRNA] OF 12-228</scope>
</reference>